<evidence type="ECO:0000255" key="1">
    <source>
        <dbReference type="HAMAP-Rule" id="MF_01710"/>
    </source>
</evidence>
<reference key="1">
    <citation type="journal article" date="2002" name="Proc. Natl. Acad. Sci. U.S.A.">
        <title>Complete genome sequence of Clostridium perfringens, an anaerobic flesh-eater.</title>
        <authorList>
            <person name="Shimizu T."/>
            <person name="Ohtani K."/>
            <person name="Hirakawa H."/>
            <person name="Ohshima K."/>
            <person name="Yamashita A."/>
            <person name="Shiba T."/>
            <person name="Ogasawara N."/>
            <person name="Hattori M."/>
            <person name="Kuhara S."/>
            <person name="Hayashi H."/>
        </authorList>
    </citation>
    <scope>NUCLEOTIDE SEQUENCE [LARGE SCALE GENOMIC DNA]</scope>
    <source>
        <strain>13 / Type A</strain>
    </source>
</reference>
<sequence length="285" mass="31962">MSIKIENLNHIYMPKTPFEKIALNNINCEIEDGEFVALIGHTGSGKSTFIQHLNGLLSPTSGNIIVDGVNIADKKVKLSDIRKKVGLVFQYPEYQLFEETIEKDIEYGPRNLGISEEEISKRVKKSMEMVGLDYETYKDKSPFDLSGGQKRRVAIAGVIAMEPKVLILDEPTAGLDPKGREDILAQIRLLHKEYGMTIIMVSHSMEDVAKIADRVIVMNSGEIVLDGKIAEVFKEVETLEKIGLAVPQVTYLIRELRNKGFNISEEIFTISQAKEALLEIIRNNN</sequence>
<organism>
    <name type="scientific">Clostridium perfringens (strain 13 / Type A)</name>
    <dbReference type="NCBI Taxonomy" id="195102"/>
    <lineage>
        <taxon>Bacteria</taxon>
        <taxon>Bacillati</taxon>
        <taxon>Bacillota</taxon>
        <taxon>Clostridia</taxon>
        <taxon>Eubacteriales</taxon>
        <taxon>Clostridiaceae</taxon>
        <taxon>Clostridium</taxon>
    </lineage>
</organism>
<accession>Q8XHV3</accession>
<proteinExistence type="inferred from homology"/>
<gene>
    <name evidence="1" type="primary">ecfA2</name>
    <name type="synonym">cbiO2</name>
    <name type="ordered locus">CPE2373</name>
</gene>
<dbReference type="EC" id="7.-.-.-" evidence="1"/>
<dbReference type="EMBL" id="BA000016">
    <property type="protein sequence ID" value="BAB82079.1"/>
    <property type="molecule type" value="Genomic_DNA"/>
</dbReference>
<dbReference type="RefSeq" id="WP_003454522.1">
    <property type="nucleotide sequence ID" value="NC_003366.1"/>
</dbReference>
<dbReference type="SMR" id="Q8XHV3"/>
<dbReference type="STRING" id="195102.gene:10491690"/>
<dbReference type="KEGG" id="cpe:CPE2373"/>
<dbReference type="HOGENOM" id="CLU_000604_1_22_9"/>
<dbReference type="Proteomes" id="UP000000818">
    <property type="component" value="Chromosome"/>
</dbReference>
<dbReference type="GO" id="GO:0043190">
    <property type="term" value="C:ATP-binding cassette (ABC) transporter complex"/>
    <property type="evidence" value="ECO:0007669"/>
    <property type="project" value="TreeGrafter"/>
</dbReference>
<dbReference type="GO" id="GO:0005524">
    <property type="term" value="F:ATP binding"/>
    <property type="evidence" value="ECO:0007669"/>
    <property type="project" value="UniProtKB-KW"/>
</dbReference>
<dbReference type="GO" id="GO:0016887">
    <property type="term" value="F:ATP hydrolysis activity"/>
    <property type="evidence" value="ECO:0007669"/>
    <property type="project" value="InterPro"/>
</dbReference>
<dbReference type="GO" id="GO:0042626">
    <property type="term" value="F:ATPase-coupled transmembrane transporter activity"/>
    <property type="evidence" value="ECO:0007669"/>
    <property type="project" value="TreeGrafter"/>
</dbReference>
<dbReference type="CDD" id="cd03225">
    <property type="entry name" value="ABC_cobalt_CbiO_domain1"/>
    <property type="match status" value="1"/>
</dbReference>
<dbReference type="FunFam" id="3.40.50.300:FF:000224">
    <property type="entry name" value="Energy-coupling factor transporter ATP-binding protein EcfA"/>
    <property type="match status" value="1"/>
</dbReference>
<dbReference type="Gene3D" id="3.40.50.300">
    <property type="entry name" value="P-loop containing nucleotide triphosphate hydrolases"/>
    <property type="match status" value="1"/>
</dbReference>
<dbReference type="InterPro" id="IPR003593">
    <property type="entry name" value="AAA+_ATPase"/>
</dbReference>
<dbReference type="InterPro" id="IPR003439">
    <property type="entry name" value="ABC_transporter-like_ATP-bd"/>
</dbReference>
<dbReference type="InterPro" id="IPR017871">
    <property type="entry name" value="ABC_transporter-like_CS"/>
</dbReference>
<dbReference type="InterPro" id="IPR015856">
    <property type="entry name" value="ABC_transpr_CbiO/EcfA_su"/>
</dbReference>
<dbReference type="InterPro" id="IPR050095">
    <property type="entry name" value="ECF_ABC_transporter_ATP-bd"/>
</dbReference>
<dbReference type="InterPro" id="IPR030946">
    <property type="entry name" value="EcfA2"/>
</dbReference>
<dbReference type="InterPro" id="IPR027417">
    <property type="entry name" value="P-loop_NTPase"/>
</dbReference>
<dbReference type="NCBIfam" id="TIGR04521">
    <property type="entry name" value="ECF_ATPase_2"/>
    <property type="match status" value="1"/>
</dbReference>
<dbReference type="NCBIfam" id="NF010158">
    <property type="entry name" value="PRK13637.1"/>
    <property type="match status" value="1"/>
</dbReference>
<dbReference type="PANTHER" id="PTHR43553:SF27">
    <property type="entry name" value="ENERGY-COUPLING FACTOR TRANSPORTER ATP-BINDING PROTEIN ECFA2"/>
    <property type="match status" value="1"/>
</dbReference>
<dbReference type="PANTHER" id="PTHR43553">
    <property type="entry name" value="HEAVY METAL TRANSPORTER"/>
    <property type="match status" value="1"/>
</dbReference>
<dbReference type="Pfam" id="PF00005">
    <property type="entry name" value="ABC_tran"/>
    <property type="match status" value="1"/>
</dbReference>
<dbReference type="SMART" id="SM00382">
    <property type="entry name" value="AAA"/>
    <property type="match status" value="1"/>
</dbReference>
<dbReference type="SUPFAM" id="SSF52540">
    <property type="entry name" value="P-loop containing nucleoside triphosphate hydrolases"/>
    <property type="match status" value="1"/>
</dbReference>
<dbReference type="PROSITE" id="PS00211">
    <property type="entry name" value="ABC_TRANSPORTER_1"/>
    <property type="match status" value="1"/>
</dbReference>
<dbReference type="PROSITE" id="PS50893">
    <property type="entry name" value="ABC_TRANSPORTER_2"/>
    <property type="match status" value="1"/>
</dbReference>
<dbReference type="PROSITE" id="PS51246">
    <property type="entry name" value="CBIO"/>
    <property type="match status" value="1"/>
</dbReference>
<protein>
    <recommendedName>
        <fullName evidence="1">Energy-coupling factor transporter ATP-binding protein EcfA2</fullName>
        <shortName evidence="1">ECF transporter A component EcfA 2</shortName>
        <ecNumber evidence="1">7.-.-.-</ecNumber>
    </recommendedName>
</protein>
<comment type="function">
    <text evidence="1">ATP-binding (A) component of a common energy-coupling factor (ECF) ABC-transporter complex. Unlike classic ABC transporters this ECF transporter provides the energy necessary to transport a number of different substrates.</text>
</comment>
<comment type="subunit">
    <text evidence="1">Forms a stable energy-coupling factor (ECF) transporter complex composed of 2 membrane-embedded substrate-binding proteins (S component), 2 ATP-binding proteins (A component) and 2 transmembrane proteins (T component).</text>
</comment>
<comment type="subcellular location">
    <subcellularLocation>
        <location evidence="1">Cell membrane</location>
        <topology evidence="1">Peripheral membrane protein</topology>
    </subcellularLocation>
</comment>
<comment type="similarity">
    <text evidence="1">Belongs to the ABC transporter superfamily. Energy-coupling factor EcfA family.</text>
</comment>
<keyword id="KW-0067">ATP-binding</keyword>
<keyword id="KW-1003">Cell membrane</keyword>
<keyword id="KW-0472">Membrane</keyword>
<keyword id="KW-0547">Nucleotide-binding</keyword>
<keyword id="KW-1185">Reference proteome</keyword>
<keyword id="KW-1278">Translocase</keyword>
<keyword id="KW-0813">Transport</keyword>
<name>ECFA2_CLOPE</name>
<feature type="chain" id="PRO_0000091998" description="Energy-coupling factor transporter ATP-binding protein EcfA2">
    <location>
        <begin position="1"/>
        <end position="285"/>
    </location>
</feature>
<feature type="domain" description="ABC transporter" evidence="1">
    <location>
        <begin position="3"/>
        <end position="245"/>
    </location>
</feature>
<feature type="binding site" evidence="1">
    <location>
        <begin position="40"/>
        <end position="47"/>
    </location>
    <ligand>
        <name>ATP</name>
        <dbReference type="ChEBI" id="CHEBI:30616"/>
    </ligand>
</feature>